<dbReference type="EC" id="3.1.1.85" evidence="1"/>
<dbReference type="EMBL" id="AE013598">
    <property type="protein sequence ID" value="AAW73489.1"/>
    <property type="status" value="ALT_INIT"/>
    <property type="molecule type" value="Genomic_DNA"/>
</dbReference>
<dbReference type="SMR" id="Q5H6D1"/>
<dbReference type="STRING" id="291331.XOO0235"/>
<dbReference type="ESTHER" id="xanor-bioh">
    <property type="family name" value="BioH"/>
</dbReference>
<dbReference type="KEGG" id="xoo:XOO0235"/>
<dbReference type="HOGENOM" id="CLU_020336_12_2_6"/>
<dbReference type="UniPathway" id="UPA00078"/>
<dbReference type="Proteomes" id="UP000006735">
    <property type="component" value="Chromosome"/>
</dbReference>
<dbReference type="GO" id="GO:0005737">
    <property type="term" value="C:cytoplasm"/>
    <property type="evidence" value="ECO:0007669"/>
    <property type="project" value="UniProtKB-SubCell"/>
</dbReference>
<dbReference type="GO" id="GO:0016020">
    <property type="term" value="C:membrane"/>
    <property type="evidence" value="ECO:0007669"/>
    <property type="project" value="TreeGrafter"/>
</dbReference>
<dbReference type="GO" id="GO:0090499">
    <property type="term" value="F:pimelyl-[acyl-carrier protein] methyl ester esterase activity"/>
    <property type="evidence" value="ECO:0007669"/>
    <property type="project" value="UniProtKB-EC"/>
</dbReference>
<dbReference type="GO" id="GO:0009102">
    <property type="term" value="P:biotin biosynthetic process"/>
    <property type="evidence" value="ECO:0007669"/>
    <property type="project" value="UniProtKB-UniRule"/>
</dbReference>
<dbReference type="Gene3D" id="3.40.50.1820">
    <property type="entry name" value="alpha/beta hydrolase"/>
    <property type="match status" value="1"/>
</dbReference>
<dbReference type="HAMAP" id="MF_01260">
    <property type="entry name" value="Carboxylester"/>
    <property type="match status" value="1"/>
</dbReference>
<dbReference type="InterPro" id="IPR000073">
    <property type="entry name" value="AB_hydrolase_1"/>
</dbReference>
<dbReference type="InterPro" id="IPR029058">
    <property type="entry name" value="AB_hydrolase_fold"/>
</dbReference>
<dbReference type="InterPro" id="IPR050266">
    <property type="entry name" value="AB_hydrolase_sf"/>
</dbReference>
<dbReference type="InterPro" id="IPR010076">
    <property type="entry name" value="BioH"/>
</dbReference>
<dbReference type="NCBIfam" id="TIGR01738">
    <property type="entry name" value="bioH"/>
    <property type="match status" value="1"/>
</dbReference>
<dbReference type="PANTHER" id="PTHR43798:SF31">
    <property type="entry name" value="AB HYDROLASE SUPERFAMILY PROTEIN YCLE"/>
    <property type="match status" value="1"/>
</dbReference>
<dbReference type="PANTHER" id="PTHR43798">
    <property type="entry name" value="MONOACYLGLYCEROL LIPASE"/>
    <property type="match status" value="1"/>
</dbReference>
<dbReference type="Pfam" id="PF00561">
    <property type="entry name" value="Abhydrolase_1"/>
    <property type="match status" value="1"/>
</dbReference>
<dbReference type="SUPFAM" id="SSF53474">
    <property type="entry name" value="alpha/beta-Hydrolases"/>
    <property type="match status" value="1"/>
</dbReference>
<comment type="function">
    <text evidence="1">The physiological role of BioH is to remove the methyl group introduced by BioC when the pimeloyl moiety is complete. It allows to synthesize pimeloyl-ACP via the fatty acid synthetic pathway through the hydrolysis of the ester bonds of pimeloyl-ACP esters.</text>
</comment>
<comment type="catalytic activity">
    <reaction evidence="1">
        <text>6-carboxyhexanoyl-[ACP] methyl ester + H2O = 6-carboxyhexanoyl-[ACP] + methanol + H(+)</text>
        <dbReference type="Rhea" id="RHEA:42700"/>
        <dbReference type="Rhea" id="RHEA-COMP:9955"/>
        <dbReference type="Rhea" id="RHEA-COMP:10186"/>
        <dbReference type="ChEBI" id="CHEBI:15377"/>
        <dbReference type="ChEBI" id="CHEBI:15378"/>
        <dbReference type="ChEBI" id="CHEBI:17790"/>
        <dbReference type="ChEBI" id="CHEBI:78846"/>
        <dbReference type="ChEBI" id="CHEBI:82735"/>
        <dbReference type="EC" id="3.1.1.85"/>
    </reaction>
</comment>
<comment type="pathway">
    <text evidence="1">Cofactor biosynthesis; biotin biosynthesis.</text>
</comment>
<comment type="subunit">
    <text evidence="1">Monomer.</text>
</comment>
<comment type="subcellular location">
    <subcellularLocation>
        <location evidence="1">Cytoplasm</location>
    </subcellularLocation>
</comment>
<comment type="similarity">
    <text evidence="1">Belongs to the AB hydrolase superfamily. Carboxylesterase BioH family.</text>
</comment>
<comment type="sequence caution" evidence="2">
    <conflict type="erroneous initiation">
        <sequence resource="EMBL-CDS" id="AAW73489"/>
    </conflict>
</comment>
<feature type="chain" id="PRO_0000204503" description="Pimeloyl-[acyl-carrier protein] methyl ester esterase">
    <location>
        <begin position="1"/>
        <end position="253"/>
    </location>
</feature>
<feature type="active site" description="Nucleophile" evidence="1">
    <location>
        <position position="78"/>
    </location>
</feature>
<feature type="active site" evidence="1">
    <location>
        <position position="203"/>
    </location>
</feature>
<feature type="active site" evidence="1">
    <location>
        <position position="231"/>
    </location>
</feature>
<feature type="binding site" evidence="1">
    <location>
        <position position="18"/>
    </location>
    <ligand>
        <name>substrate</name>
    </ligand>
</feature>
<feature type="binding site" evidence="1">
    <location>
        <begin position="78"/>
        <end position="79"/>
    </location>
    <ligand>
        <name>substrate</name>
    </ligand>
</feature>
<feature type="binding site" evidence="1">
    <location>
        <begin position="139"/>
        <end position="143"/>
    </location>
    <ligand>
        <name>substrate</name>
    </ligand>
</feature>
<feature type="binding site" evidence="1">
    <location>
        <position position="231"/>
    </location>
    <ligand>
        <name>substrate</name>
    </ligand>
</feature>
<gene>
    <name evidence="1" type="primary">bioH</name>
    <name type="ordered locus">XOO0235</name>
</gene>
<organism>
    <name type="scientific">Xanthomonas oryzae pv. oryzae (strain KACC10331 / KXO85)</name>
    <dbReference type="NCBI Taxonomy" id="291331"/>
    <lineage>
        <taxon>Bacteria</taxon>
        <taxon>Pseudomonadati</taxon>
        <taxon>Pseudomonadota</taxon>
        <taxon>Gammaproteobacteria</taxon>
        <taxon>Lysobacterales</taxon>
        <taxon>Lysobacteraceae</taxon>
        <taxon>Xanthomonas</taxon>
    </lineage>
</organism>
<accession>Q5H6D1</accession>
<name>BIOH_XANOR</name>
<protein>
    <recommendedName>
        <fullName evidence="1">Pimeloyl-[acyl-carrier protein] methyl ester esterase</fullName>
        <ecNumber evidence="1">3.1.1.85</ecNumber>
    </recommendedName>
    <alternativeName>
        <fullName evidence="1">Biotin synthesis protein BioH</fullName>
    </alternativeName>
    <alternativeName>
        <fullName evidence="1">Carboxylesterase BioH</fullName>
    </alternativeName>
</protein>
<keyword id="KW-0093">Biotin biosynthesis</keyword>
<keyword id="KW-0963">Cytoplasm</keyword>
<keyword id="KW-0378">Hydrolase</keyword>
<keyword id="KW-1185">Reference proteome</keyword>
<keyword id="KW-0719">Serine esterase</keyword>
<reference key="1">
    <citation type="journal article" date="2005" name="Nucleic Acids Res.">
        <title>The genome sequence of Xanthomonas oryzae pathovar oryzae KACC10331, the bacterial blight pathogen of rice.</title>
        <authorList>
            <person name="Lee B.-M."/>
            <person name="Park Y.-J."/>
            <person name="Park D.-S."/>
            <person name="Kang H.-W."/>
            <person name="Kim J.-G."/>
            <person name="Song E.-S."/>
            <person name="Park I.-C."/>
            <person name="Yoon U.-H."/>
            <person name="Hahn J.-H."/>
            <person name="Koo B.-S."/>
            <person name="Lee G.-B."/>
            <person name="Kim H."/>
            <person name="Park H.-S."/>
            <person name="Yoon K.-O."/>
            <person name="Kim J.-H."/>
            <person name="Jung C.-H."/>
            <person name="Koh N.-H."/>
            <person name="Seo J.-S."/>
            <person name="Go S.-J."/>
        </authorList>
    </citation>
    <scope>NUCLEOTIDE SEQUENCE [LARGE SCALE GENOMIC DNA]</scope>
    <source>
        <strain>KACC10331 / KXO85</strain>
    </source>
</reference>
<sequence length="253" mass="27082">MHIDVIGHGPALVLLHGWALHGGVFAPLVERLAPHYQLHLVDLPGHGFSRDDSTPLALPYVVAEIAAATPPAVWLGWSLGGLFALHAAATLPQVRGLAMIAATPRFVRGSDWPDAVQRELFVQFGTELSRDYRGTLERFLALDTLGSAHARSELRSLRETLTARGEPAPEALQQGLSLLERTDLRRALPQLARPSLWIAGQRDRLVPAAGMHAAAALSPHAQALTIAGGGHAPFLGHADQVSEALQRFVASVP</sequence>
<evidence type="ECO:0000255" key="1">
    <source>
        <dbReference type="HAMAP-Rule" id="MF_01260"/>
    </source>
</evidence>
<evidence type="ECO:0000305" key="2"/>
<proteinExistence type="inferred from homology"/>